<protein>
    <recommendedName>
        <fullName>Thyroxine-binding globulin</fullName>
    </recommendedName>
    <alternativeName>
        <fullName>Serpin A7</fullName>
    </alternativeName>
    <alternativeName>
        <fullName>T4-binding globulin</fullName>
    </alternativeName>
</protein>
<accession>P05543</accession>
<accession>D3DUX1</accession>
<name>THBG_HUMAN</name>
<evidence type="ECO:0000269" key="1">
    <source>
    </source>
</evidence>
<evidence type="ECO:0000269" key="2">
    <source>
    </source>
</evidence>
<evidence type="ECO:0000269" key="3">
    <source>
    </source>
</evidence>
<evidence type="ECO:0000269" key="4">
    <source>
    </source>
</evidence>
<evidence type="ECO:0000269" key="5">
    <source>
    </source>
</evidence>
<evidence type="ECO:0000269" key="6">
    <source>
    </source>
</evidence>
<evidence type="ECO:0000269" key="7">
    <source>
    </source>
</evidence>
<evidence type="ECO:0000269" key="8">
    <source>
    </source>
</evidence>
<evidence type="ECO:0000269" key="9">
    <source>
    </source>
</evidence>
<evidence type="ECO:0000269" key="10">
    <source>
    </source>
</evidence>
<evidence type="ECO:0000269" key="11">
    <source>
    </source>
</evidence>
<evidence type="ECO:0000269" key="12">
    <source>
    </source>
</evidence>
<evidence type="ECO:0000305" key="13"/>
<evidence type="ECO:0007829" key="14">
    <source>
        <dbReference type="PDB" id="2XN6"/>
    </source>
</evidence>
<evidence type="ECO:0007829" key="15">
    <source>
        <dbReference type="PDB" id="4X30"/>
    </source>
</evidence>
<feature type="signal peptide" evidence="12">
    <location>
        <begin position="1"/>
        <end position="20"/>
    </location>
</feature>
<feature type="chain" id="PRO_0000032436" description="Thyroxine-binding globulin">
    <location>
        <begin position="21"/>
        <end position="415"/>
    </location>
</feature>
<feature type="binding site" evidence="4">
    <location>
        <position position="293"/>
    </location>
    <ligand>
        <name>thyroxine</name>
        <dbReference type="ChEBI" id="CHEBI:305790"/>
    </ligand>
</feature>
<feature type="binding site" evidence="4">
    <location>
        <position position="398"/>
    </location>
    <ligand>
        <name>thyroxine</name>
        <dbReference type="ChEBI" id="CHEBI:305790"/>
    </ligand>
</feature>
<feature type="glycosylation site" description="N-linked (GlcNAc...) (complex) asparagine" evidence="3 7">
    <location>
        <position position="36"/>
    </location>
</feature>
<feature type="glycosylation site" description="N-linked (GlcNAc...) asparagine">
    <location>
        <position position="99"/>
    </location>
</feature>
<feature type="glycosylation site" description="N-linked (GlcNAc...) asparagine; in variant Gary" evidence="13">
    <location>
        <position position="116"/>
    </location>
</feature>
<feature type="glycosylation site" description="N-linked (GlcNAc...) asparagine" evidence="3">
    <location>
        <position position="165"/>
    </location>
</feature>
<feature type="glycosylation site" description="N-linked (GlcNAc...) asparagine">
    <location>
        <position position="253"/>
    </location>
</feature>
<feature type="sequence variant" id="VAR_007102" description="Associated with F-303 in San Diego; partial thyroxine-binding globulin deficiency; dbSNP:rs72554662." evidence="2">
    <original>S</original>
    <variation>T</variation>
    <location>
        <position position="43"/>
    </location>
</feature>
<feature type="sequence variant" id="VAR_007103" description="Gary; severe thyroxine-binding globulin deficiency; dbSNP:rs28933689." evidence="11">
    <original>I</original>
    <variation>N</variation>
    <location>
        <position position="116"/>
    </location>
</feature>
<feature type="sequence variant" id="VAR_007104" description="Montreal/TBG-M; partial thyroxine-binding globulin deficiency; dbSNP:rs28933688." evidence="6">
    <original>A</original>
    <variation>P</variation>
    <location>
        <position position="133"/>
    </location>
</feature>
<feature type="sequence variant" id="VAR_007105" description="TBG-S/Slow; dbSNP:rs1050086." evidence="8">
    <original>D</original>
    <variation>N</variation>
    <location>
        <position position="191"/>
    </location>
</feature>
<feature type="sequence variant" id="VAR_007106" description="TBG-A/Aborigine; dbSNP:rs2234036." evidence="10">
    <original>A</original>
    <variation>T</variation>
    <location>
        <position position="211"/>
    </location>
</feature>
<feature type="sequence variant" id="VAR_007107" description="CD5; complete thyroxine-binding globulin deficiency; dbSNP:rs28937312." evidence="9">
    <original>L</original>
    <variation>P</variation>
    <location>
        <position position="247"/>
    </location>
</feature>
<feature type="sequence variant" id="VAR_007108" description="Associated with T-43 in San Diego; dbSNP:rs1804495." evidence="2">
    <original>L</original>
    <variation>F</variation>
    <location>
        <position position="303"/>
    </location>
</feature>
<feature type="sequence variant" id="VAR_007109" description="Quebec; partial thyroxine-binding globulin deficiency; dbSNP:rs72554659." evidence="5">
    <original>H</original>
    <variation>Y</variation>
    <location>
        <position position="351"/>
    </location>
</feature>
<feature type="sequence variant" id="VAR_007110" description="Kumamoto; partial thyroxine-binding globulin deficiency; dbSNP:rs72554658." evidence="1">
    <original>P</original>
    <variation>L</variation>
    <location>
        <position position="383"/>
    </location>
</feature>
<feature type="sequence conflict" description="In Ref. 7; AA sequence." evidence="13" ref="7">
    <original>CH</original>
    <variation>DS</variation>
    <location>
        <begin position="30"/>
        <end position="31"/>
    </location>
</feature>
<feature type="sequence conflict" description="In Ref. 7; AA sequence." evidence="13" ref="7">
    <original>T</original>
    <variation>S</variation>
    <location>
        <position position="38"/>
    </location>
</feature>
<feature type="sequence conflict" description="In Ref. 1; AAA60616." evidence="13" ref="1">
    <original>I</original>
    <variation>T</variation>
    <location>
        <position position="197"/>
    </location>
</feature>
<feature type="helix" evidence="14">
    <location>
        <begin position="40"/>
        <end position="60"/>
    </location>
</feature>
<feature type="strand" evidence="14">
    <location>
        <begin position="66"/>
        <end position="68"/>
    </location>
</feature>
<feature type="helix" evidence="14">
    <location>
        <begin position="70"/>
        <end position="82"/>
    </location>
</feature>
<feature type="helix" evidence="14">
    <location>
        <begin position="86"/>
        <end position="95"/>
    </location>
</feature>
<feature type="turn" evidence="14">
    <location>
        <begin position="100"/>
        <end position="102"/>
    </location>
</feature>
<feature type="helix" evidence="14">
    <location>
        <begin position="105"/>
        <end position="120"/>
    </location>
</feature>
<feature type="strand" evidence="14">
    <location>
        <begin position="126"/>
        <end position="137"/>
    </location>
</feature>
<feature type="helix" evidence="14">
    <location>
        <begin position="144"/>
        <end position="153"/>
    </location>
</feature>
<feature type="strand" evidence="14">
    <location>
        <begin position="156"/>
        <end position="161"/>
    </location>
</feature>
<feature type="helix" evidence="14">
    <location>
        <begin position="166"/>
        <end position="180"/>
    </location>
</feature>
<feature type="turn" evidence="14">
    <location>
        <begin position="181"/>
        <end position="183"/>
    </location>
</feature>
<feature type="strand" evidence="14">
    <location>
        <begin position="198"/>
        <end position="212"/>
    </location>
</feature>
<feature type="helix" evidence="14">
    <location>
        <begin position="216"/>
        <end position="218"/>
    </location>
</feature>
<feature type="strand" evidence="14">
    <location>
        <begin position="220"/>
        <end position="228"/>
    </location>
</feature>
<feature type="strand" evidence="14">
    <location>
        <begin position="231"/>
        <end position="249"/>
    </location>
</feature>
<feature type="turn" evidence="14">
    <location>
        <begin position="250"/>
        <end position="253"/>
    </location>
</feature>
<feature type="strand" evidence="14">
    <location>
        <begin position="254"/>
        <end position="272"/>
    </location>
</feature>
<feature type="helix" evidence="14">
    <location>
        <begin position="277"/>
        <end position="283"/>
    </location>
</feature>
<feature type="helix" evidence="14">
    <location>
        <begin position="286"/>
        <end position="295"/>
    </location>
</feature>
<feature type="strand" evidence="14">
    <location>
        <begin position="297"/>
        <end position="306"/>
    </location>
</feature>
<feature type="strand" evidence="14">
    <location>
        <begin position="308"/>
        <end position="315"/>
    </location>
</feature>
<feature type="helix" evidence="14">
    <location>
        <begin position="317"/>
        <end position="323"/>
    </location>
</feature>
<feature type="helix" evidence="14">
    <location>
        <begin position="327"/>
        <end position="329"/>
    </location>
</feature>
<feature type="turn" evidence="14">
    <location>
        <begin position="336"/>
        <end position="338"/>
    </location>
</feature>
<feature type="strand" evidence="15">
    <location>
        <begin position="339"/>
        <end position="342"/>
    </location>
</feature>
<feature type="strand" evidence="14">
    <location>
        <begin position="344"/>
        <end position="357"/>
    </location>
</feature>
<feature type="strand" evidence="14">
    <location>
        <begin position="359"/>
        <end position="374"/>
    </location>
</feature>
<feature type="strand" evidence="14">
    <location>
        <begin position="384"/>
        <end position="386"/>
    </location>
</feature>
<feature type="strand" evidence="14">
    <location>
        <begin position="391"/>
        <end position="397"/>
    </location>
</feature>
<feature type="turn" evidence="14">
    <location>
        <begin position="398"/>
        <end position="401"/>
    </location>
</feature>
<feature type="strand" evidence="14">
    <location>
        <begin position="402"/>
        <end position="410"/>
    </location>
</feature>
<organism>
    <name type="scientific">Homo sapiens</name>
    <name type="common">Human</name>
    <dbReference type="NCBI Taxonomy" id="9606"/>
    <lineage>
        <taxon>Eukaryota</taxon>
        <taxon>Metazoa</taxon>
        <taxon>Chordata</taxon>
        <taxon>Craniata</taxon>
        <taxon>Vertebrata</taxon>
        <taxon>Euteleostomi</taxon>
        <taxon>Mammalia</taxon>
        <taxon>Eutheria</taxon>
        <taxon>Euarchontoglires</taxon>
        <taxon>Primates</taxon>
        <taxon>Haplorrhini</taxon>
        <taxon>Catarrhini</taxon>
        <taxon>Hominidae</taxon>
        <taxon>Homo</taxon>
    </lineage>
</organism>
<gene>
    <name type="primary">SERPINA7</name>
    <name type="synonym">TBG</name>
</gene>
<dbReference type="EMBL" id="M14091">
    <property type="protein sequence ID" value="AAA60616.1"/>
    <property type="molecule type" value="mRNA"/>
</dbReference>
<dbReference type="EMBL" id="X64171">
    <property type="protein sequence ID" value="CAA45509.1"/>
    <property type="molecule type" value="Genomic_DNA"/>
</dbReference>
<dbReference type="EMBL" id="L13470">
    <property type="protein sequence ID" value="AAA16067.1"/>
    <property type="molecule type" value="Genomic_DNA"/>
</dbReference>
<dbReference type="EMBL" id="Z83850">
    <property type="status" value="NOT_ANNOTATED_CDS"/>
    <property type="molecule type" value="Genomic_DNA"/>
</dbReference>
<dbReference type="EMBL" id="CH471120">
    <property type="protein sequence ID" value="EAX02747.1"/>
    <property type="molecule type" value="Genomic_DNA"/>
</dbReference>
<dbReference type="EMBL" id="CH471120">
    <property type="protein sequence ID" value="EAX02748.1"/>
    <property type="molecule type" value="Genomic_DNA"/>
</dbReference>
<dbReference type="EMBL" id="BC020747">
    <property type="protein sequence ID" value="AAH20747.1"/>
    <property type="molecule type" value="mRNA"/>
</dbReference>
<dbReference type="CCDS" id="CCDS14518.1"/>
<dbReference type="PIR" id="A47224">
    <property type="entry name" value="A47224"/>
</dbReference>
<dbReference type="RefSeq" id="NP_000345.2">
    <property type="nucleotide sequence ID" value="NM_000354.6"/>
</dbReference>
<dbReference type="PDB" id="2CEO">
    <property type="method" value="X-ray"/>
    <property type="resolution" value="2.80 A"/>
    <property type="chains" value="A/B=39-415"/>
</dbReference>
<dbReference type="PDB" id="2RIV">
    <property type="method" value="X-ray"/>
    <property type="resolution" value="1.50 A"/>
    <property type="chains" value="A=33-386, B=376-415"/>
</dbReference>
<dbReference type="PDB" id="2RIW">
    <property type="method" value="X-ray"/>
    <property type="resolution" value="2.04 A"/>
    <property type="chains" value="A=39-386, B=376-415"/>
</dbReference>
<dbReference type="PDB" id="2XN3">
    <property type="method" value="X-ray"/>
    <property type="resolution" value="2.09 A"/>
    <property type="chains" value="A=33-386, B=377-415"/>
</dbReference>
<dbReference type="PDB" id="2XN5">
    <property type="method" value="X-ray"/>
    <property type="resolution" value="1.70 A"/>
    <property type="chains" value="A=32-380, B=381-415"/>
</dbReference>
<dbReference type="PDB" id="2XN6">
    <property type="method" value="X-ray"/>
    <property type="resolution" value="1.29 A"/>
    <property type="chains" value="A=32-380, B=381-415"/>
</dbReference>
<dbReference type="PDB" id="2XN7">
    <property type="method" value="X-ray"/>
    <property type="resolution" value="1.43 A"/>
    <property type="chains" value="A=32-380, B=381-415"/>
</dbReference>
<dbReference type="PDB" id="4X30">
    <property type="method" value="X-ray"/>
    <property type="resolution" value="1.55 A"/>
    <property type="chains" value="A=21-415"/>
</dbReference>
<dbReference type="PDB" id="4YIA">
    <property type="method" value="X-ray"/>
    <property type="resolution" value="1.58 A"/>
    <property type="chains" value="A=1-386, B=382-415"/>
</dbReference>
<dbReference type="PDBsum" id="2CEO"/>
<dbReference type="PDBsum" id="2RIV"/>
<dbReference type="PDBsum" id="2RIW"/>
<dbReference type="PDBsum" id="2XN3"/>
<dbReference type="PDBsum" id="2XN5"/>
<dbReference type="PDBsum" id="2XN6"/>
<dbReference type="PDBsum" id="2XN7"/>
<dbReference type="PDBsum" id="4X30"/>
<dbReference type="PDBsum" id="4YIA"/>
<dbReference type="SMR" id="P05543"/>
<dbReference type="BioGRID" id="112769">
    <property type="interactions" value="11"/>
</dbReference>
<dbReference type="FunCoup" id="P05543">
    <property type="interactions" value="96"/>
</dbReference>
<dbReference type="IntAct" id="P05543">
    <property type="interactions" value="5"/>
</dbReference>
<dbReference type="STRING" id="9606.ENSP00000329374"/>
<dbReference type="ChEMBL" id="CHEMBL3843"/>
<dbReference type="DrugBank" id="DB01629">
    <property type="generic name" value="5-fluorouridine"/>
</dbReference>
<dbReference type="DrugBank" id="DB11100">
    <property type="generic name" value="Allantoin"/>
</dbReference>
<dbReference type="DrugBank" id="DB00023">
    <property type="generic name" value="Asparaginase Escherichia coli"/>
</dbReference>
<dbReference type="DrugBank" id="DB00636">
    <property type="generic name" value="Clofibrate"/>
</dbReference>
<dbReference type="DrugBank" id="DB00286">
    <property type="generic name" value="Conjugated estrogens"/>
</dbReference>
<dbReference type="DrugBank" id="DB09130">
    <property type="generic name" value="Copper"/>
</dbReference>
<dbReference type="DrugBank" id="DB01219">
    <property type="generic name" value="Dantrolene"/>
</dbReference>
<dbReference type="DrugBank" id="DB01452">
    <property type="generic name" value="Diamorphine"/>
</dbReference>
<dbReference type="DrugBank" id="DB09381">
    <property type="generic name" value="Esterified estrogens"/>
</dbReference>
<dbReference type="DrugBank" id="DB00754">
    <property type="generic name" value="Ethotoin"/>
</dbReference>
<dbReference type="DrugBank" id="DB08984">
    <property type="generic name" value="Etofenamate"/>
</dbReference>
<dbReference type="DrugBank" id="DB00322">
    <property type="generic name" value="Floxuridine"/>
</dbReference>
<dbReference type="DrugBank" id="DB00544">
    <property type="generic name" value="Fluorouracil"/>
</dbReference>
<dbReference type="DrugBank" id="DB01320">
    <property type="generic name" value="Fosphenytoin"/>
</dbReference>
<dbReference type="DrugBank" id="DB00695">
    <property type="generic name" value="Furosemide"/>
</dbReference>
<dbReference type="DrugBank" id="DB00451">
    <property type="generic name" value="Levothyroxine"/>
</dbReference>
<dbReference type="DrugBank" id="DB00279">
    <property type="generic name" value="Liothyronine"/>
</dbReference>
<dbReference type="DrugBank" id="DB12425">
    <property type="generic name" value="Liothyronine I-131"/>
</dbReference>
<dbReference type="DrugBank" id="DB01583">
    <property type="generic name" value="Liotrix"/>
</dbReference>
<dbReference type="DrugBank" id="DB00939">
    <property type="generic name" value="Meclofenamic acid"/>
</dbReference>
<dbReference type="DrugBank" id="DB00532">
    <property type="generic name" value="Mephenytoin"/>
</dbReference>
<dbReference type="DrugBank" id="DB00648">
    <property type="generic name" value="Mitotane"/>
</dbReference>
<dbReference type="DrugBank" id="DB13396">
    <property type="generic name" value="Neocitrullamon"/>
</dbReference>
<dbReference type="DrugBank" id="DB00627">
    <property type="generic name" value="Niacin"/>
</dbReference>
<dbReference type="DrugBank" id="DB05235">
    <property type="generic name" value="NRP409"/>
</dbReference>
<dbReference type="DrugBank" id="DB00059">
    <property type="generic name" value="Pegaspargase"/>
</dbReference>
<dbReference type="DrugBank" id="DB00252">
    <property type="generic name" value="Phenytoin"/>
</dbReference>
<dbReference type="DrugBank" id="DB09317">
    <property type="generic name" value="Synthetic Conjugated Estrogens, A"/>
</dbReference>
<dbReference type="DrugBank" id="DB09318">
    <property type="generic name" value="Synthetic Conjugated Estrogens, B"/>
</dbReference>
<dbReference type="DrugBank" id="DB00675">
    <property type="generic name" value="Tamoxifen"/>
</dbReference>
<dbReference type="DrugBank" id="DB09256">
    <property type="generic name" value="Tegafur"/>
</dbReference>
<dbReference type="DrugBank" id="DB09100">
    <property type="generic name" value="Thyroid, porcine"/>
</dbReference>
<dbReference type="MEROPS" id="I04.955"/>
<dbReference type="GlyConnect" id="750">
    <property type="glycosylation" value="13 N-Linked glycans (3 sites)"/>
</dbReference>
<dbReference type="GlyCosmos" id="P05543">
    <property type="glycosylation" value="6 sites, 18 glycans"/>
</dbReference>
<dbReference type="GlyGen" id="P05543">
    <property type="glycosylation" value="5 sites, 40 N-linked glycans (3 sites), 1 O-linked glycan (1 site)"/>
</dbReference>
<dbReference type="iPTMnet" id="P05543"/>
<dbReference type="PhosphoSitePlus" id="P05543"/>
<dbReference type="BioMuta" id="SERPINA7"/>
<dbReference type="DMDM" id="1351236"/>
<dbReference type="jPOST" id="P05543"/>
<dbReference type="MassIVE" id="P05543"/>
<dbReference type="PaxDb" id="9606-ENSP00000329374"/>
<dbReference type="PeptideAtlas" id="P05543"/>
<dbReference type="ProteomicsDB" id="51845"/>
<dbReference type="Pumba" id="P05543"/>
<dbReference type="Antibodypedia" id="452">
    <property type="antibodies" value="444 antibodies from 35 providers"/>
</dbReference>
<dbReference type="DNASU" id="6906"/>
<dbReference type="Ensembl" id="ENST00000327674.8">
    <property type="protein sequence ID" value="ENSP00000329374.4"/>
    <property type="gene ID" value="ENSG00000123561.15"/>
</dbReference>
<dbReference type="Ensembl" id="ENST00000372563.2">
    <property type="protein sequence ID" value="ENSP00000361644.1"/>
    <property type="gene ID" value="ENSG00000123561.15"/>
</dbReference>
<dbReference type="GeneID" id="6906"/>
<dbReference type="KEGG" id="hsa:6906"/>
<dbReference type="MANE-Select" id="ENST00000372563.2">
    <property type="protein sequence ID" value="ENSP00000361644.1"/>
    <property type="RefSeq nucleotide sequence ID" value="NM_000354.6"/>
    <property type="RefSeq protein sequence ID" value="NP_000345.2"/>
</dbReference>
<dbReference type="UCSC" id="uc004eme.3">
    <property type="organism name" value="human"/>
</dbReference>
<dbReference type="AGR" id="HGNC:11583"/>
<dbReference type="CTD" id="6906"/>
<dbReference type="DisGeNET" id="6906"/>
<dbReference type="GeneCards" id="SERPINA7"/>
<dbReference type="HGNC" id="HGNC:11583">
    <property type="gene designation" value="SERPINA7"/>
</dbReference>
<dbReference type="HPA" id="ENSG00000123561">
    <property type="expression patterns" value="Tissue enriched (liver)"/>
</dbReference>
<dbReference type="MalaCards" id="SERPINA7"/>
<dbReference type="MIM" id="300932">
    <property type="type" value="phenotype"/>
</dbReference>
<dbReference type="MIM" id="314200">
    <property type="type" value="gene"/>
</dbReference>
<dbReference type="neXtProt" id="NX_P05543"/>
<dbReference type="OpenTargets" id="ENSG00000123561"/>
<dbReference type="PharmGKB" id="PA36347"/>
<dbReference type="VEuPathDB" id="HostDB:ENSG00000123561"/>
<dbReference type="eggNOG" id="KOG2392">
    <property type="taxonomic scope" value="Eukaryota"/>
</dbReference>
<dbReference type="GeneTree" id="ENSGT00940000161113"/>
<dbReference type="HOGENOM" id="CLU_023330_2_1_1"/>
<dbReference type="InParanoid" id="P05543"/>
<dbReference type="OMA" id="CFKAQWA"/>
<dbReference type="OrthoDB" id="671595at2759"/>
<dbReference type="PAN-GO" id="P05543">
    <property type="GO annotations" value="3 GO annotations based on evolutionary models"/>
</dbReference>
<dbReference type="PhylomeDB" id="P05543"/>
<dbReference type="TreeFam" id="TF343201"/>
<dbReference type="PathwayCommons" id="P05543"/>
<dbReference type="SignaLink" id="P05543"/>
<dbReference type="BioGRID-ORCS" id="6906">
    <property type="hits" value="11 hits in 762 CRISPR screens"/>
</dbReference>
<dbReference type="EvolutionaryTrace" id="P05543"/>
<dbReference type="GenomeRNAi" id="6906"/>
<dbReference type="Pharos" id="P05543">
    <property type="development level" value="Tbio"/>
</dbReference>
<dbReference type="PRO" id="PR:P05543"/>
<dbReference type="Proteomes" id="UP000005640">
    <property type="component" value="Chromosome X"/>
</dbReference>
<dbReference type="RNAct" id="P05543">
    <property type="molecule type" value="protein"/>
</dbReference>
<dbReference type="Bgee" id="ENSG00000123561">
    <property type="expression patterns" value="Expressed in liver and 49 other cell types or tissues"/>
</dbReference>
<dbReference type="GO" id="GO:0070062">
    <property type="term" value="C:extracellular exosome"/>
    <property type="evidence" value="ECO:0007005"/>
    <property type="project" value="UniProtKB"/>
</dbReference>
<dbReference type="GO" id="GO:0005576">
    <property type="term" value="C:extracellular region"/>
    <property type="evidence" value="ECO:0000303"/>
    <property type="project" value="UniProtKB"/>
</dbReference>
<dbReference type="GO" id="GO:0005615">
    <property type="term" value="C:extracellular space"/>
    <property type="evidence" value="ECO:0000318"/>
    <property type="project" value="GO_Central"/>
</dbReference>
<dbReference type="GO" id="GO:0004867">
    <property type="term" value="F:serine-type endopeptidase inhibitor activity"/>
    <property type="evidence" value="ECO:0000318"/>
    <property type="project" value="GO_Central"/>
</dbReference>
<dbReference type="GO" id="GO:0070327">
    <property type="term" value="P:thyroid hormone transport"/>
    <property type="evidence" value="ECO:0000315"/>
    <property type="project" value="UniProtKB"/>
</dbReference>
<dbReference type="CDD" id="cd19555">
    <property type="entry name" value="serpinA7_TBG"/>
    <property type="match status" value="1"/>
</dbReference>
<dbReference type="FunFam" id="2.30.39.10:FF:000003">
    <property type="entry name" value="alpha-1-antitrypsin isoform X1"/>
    <property type="match status" value="1"/>
</dbReference>
<dbReference type="FunFam" id="3.30.497.10:FF:000001">
    <property type="entry name" value="Serine protease inhibitor"/>
    <property type="match status" value="1"/>
</dbReference>
<dbReference type="FunFam" id="2.10.310.10:FF:000001">
    <property type="entry name" value="Serpin family A member 1"/>
    <property type="match status" value="1"/>
</dbReference>
<dbReference type="Gene3D" id="2.30.39.10">
    <property type="entry name" value="Alpha-1-antitrypsin, domain 1"/>
    <property type="match status" value="1"/>
</dbReference>
<dbReference type="Gene3D" id="3.30.497.10">
    <property type="entry name" value="Antithrombin, subunit I, domain 2"/>
    <property type="match status" value="1"/>
</dbReference>
<dbReference type="Gene3D" id="2.10.310.10">
    <property type="entry name" value="Serpins superfamily"/>
    <property type="match status" value="1"/>
</dbReference>
<dbReference type="InterPro" id="IPR023795">
    <property type="entry name" value="Serpin_CS"/>
</dbReference>
<dbReference type="InterPro" id="IPR023796">
    <property type="entry name" value="Serpin_dom"/>
</dbReference>
<dbReference type="InterPro" id="IPR000215">
    <property type="entry name" value="Serpin_fam"/>
</dbReference>
<dbReference type="InterPro" id="IPR036186">
    <property type="entry name" value="Serpin_sf"/>
</dbReference>
<dbReference type="InterPro" id="IPR042178">
    <property type="entry name" value="Serpin_sf_1"/>
</dbReference>
<dbReference type="InterPro" id="IPR042185">
    <property type="entry name" value="Serpin_sf_2"/>
</dbReference>
<dbReference type="PANTHER" id="PTHR11461">
    <property type="entry name" value="SERINE PROTEASE INHIBITOR, SERPIN"/>
    <property type="match status" value="1"/>
</dbReference>
<dbReference type="PANTHER" id="PTHR11461:SF375">
    <property type="entry name" value="THYROXINE-BINDING GLOBULIN"/>
    <property type="match status" value="1"/>
</dbReference>
<dbReference type="Pfam" id="PF00079">
    <property type="entry name" value="Serpin"/>
    <property type="match status" value="1"/>
</dbReference>
<dbReference type="PRINTS" id="PR00780">
    <property type="entry name" value="LEUSERPINII"/>
</dbReference>
<dbReference type="SMART" id="SM00093">
    <property type="entry name" value="SERPIN"/>
    <property type="match status" value="1"/>
</dbReference>
<dbReference type="SUPFAM" id="SSF56574">
    <property type="entry name" value="Serpins"/>
    <property type="match status" value="1"/>
</dbReference>
<dbReference type="PROSITE" id="PS00284">
    <property type="entry name" value="SERPIN"/>
    <property type="match status" value="1"/>
</dbReference>
<comment type="function">
    <text>Major thyroid hormone transport protein in serum.</text>
</comment>
<comment type="subcellular location">
    <subcellularLocation>
        <location>Secreted</location>
    </subcellularLocation>
</comment>
<comment type="tissue specificity">
    <text>Expressed by the liver and secreted in plasma.</text>
</comment>
<comment type="polymorphism">
    <text evidence="1 2 5 6 8 9 10 11">Genetic variants in SERPINA7 influence the serum levels of thyroxine-binding globulin and define the thyroxine-binding globulin quantitative trait locus (TBGQTL) [MIM:300932]. Individuals with low or high serum levels of thyroxine-binding globulin show, respectively, reduced or elevated protein-bound iodine but are euthyroid and do not manifest major metabolic alterations (PubMed:1294376, PubMed:1515456, PubMed:1901689, PubMed:1906047, PubMed:2155256, PubMed:2501669). Two qualitative TBG variants occur in particular populations. TBG-A is found in 40% of Australian aborigines, it has reduced affinity for thyroxine and triiodothyroxine and increased susceptibility to inactivation by heat or acid (PubMed:2495303). TBG-S ('s' for slow shift on isoelectic focusing) is found in blacks, Eskimos, Melanesians, Polynesians and Indonesians, but not in Caucasians; TBG-S is slightly more thermolabile (PubMed:2115061).</text>
</comment>
<comment type="similarity">
    <text evidence="13">Belongs to the serpin family.</text>
</comment>
<proteinExistence type="evidence at protein level"/>
<reference key="1">
    <citation type="journal article" date="1986" name="Proc. Natl. Acad. Sci. U.S.A.">
        <title>Complete amino acid sequence of human thyroxine-binding globulin deduced from cloned DNA: close homology to the serine antiproteases.</title>
        <authorList>
            <person name="Flink I.L."/>
            <person name="Bayley T.J."/>
            <person name="Gustafson T.A."/>
            <person name="Markham B.E."/>
            <person name="Morkin E."/>
        </authorList>
    </citation>
    <scope>NUCLEOTIDE SEQUENCE [MRNA]</scope>
    <source>
        <tissue>Liver</tissue>
    </source>
</reference>
<reference key="2">
    <citation type="journal article" date="1993" name="Biochim. Biophys. Acta">
        <title>The structure of the human thyroxine binding globulin (TBG) gene.</title>
        <authorList>
            <person name="Akbari M.T."/>
            <person name="Kapadi A."/>
            <person name="Farmer M.J."/>
            <person name="Fitch N.J.S."/>
            <person name="McCann K.P."/>
            <person name="Kordestani S."/>
            <person name="Flink I.L."/>
            <person name="Sheppard M.C."/>
            <person name="Ramsden D.B."/>
        </authorList>
    </citation>
    <scope>NUCLEOTIDE SEQUENCE [GENOMIC DNA]</scope>
</reference>
<reference key="3">
    <citation type="journal article" date="1993" name="Mol. Endocrinol.">
        <title>Human thyroxine-binding globulin gene: complete sequence and transcriptional regulation.</title>
        <authorList>
            <person name="Hayashi Y."/>
            <person name="Mori Y."/>
            <person name="Janssen O.E."/>
            <person name="Sunthornthepvarakul T."/>
            <person name="Weiss R.E."/>
            <person name="Takeda K."/>
            <person name="Weinberg M."/>
            <person name="Seo H."/>
            <person name="Bell G.I."/>
            <person name="Refetoff S."/>
        </authorList>
    </citation>
    <scope>NUCLEOTIDE SEQUENCE [GENOMIC DNA]</scope>
</reference>
<reference key="4">
    <citation type="journal article" date="2005" name="Nature">
        <title>The DNA sequence of the human X chromosome.</title>
        <authorList>
            <person name="Ross M.T."/>
            <person name="Grafham D.V."/>
            <person name="Coffey A.J."/>
            <person name="Scherer S."/>
            <person name="McLay K."/>
            <person name="Muzny D."/>
            <person name="Platzer M."/>
            <person name="Howell G.R."/>
            <person name="Burrows C."/>
            <person name="Bird C.P."/>
            <person name="Frankish A."/>
            <person name="Lovell F.L."/>
            <person name="Howe K.L."/>
            <person name="Ashurst J.L."/>
            <person name="Fulton R.S."/>
            <person name="Sudbrak R."/>
            <person name="Wen G."/>
            <person name="Jones M.C."/>
            <person name="Hurles M.E."/>
            <person name="Andrews T.D."/>
            <person name="Scott C.E."/>
            <person name="Searle S."/>
            <person name="Ramser J."/>
            <person name="Whittaker A."/>
            <person name="Deadman R."/>
            <person name="Carter N.P."/>
            <person name="Hunt S.E."/>
            <person name="Chen R."/>
            <person name="Cree A."/>
            <person name="Gunaratne P."/>
            <person name="Havlak P."/>
            <person name="Hodgson A."/>
            <person name="Metzker M.L."/>
            <person name="Richards S."/>
            <person name="Scott G."/>
            <person name="Steffen D."/>
            <person name="Sodergren E."/>
            <person name="Wheeler D.A."/>
            <person name="Worley K.C."/>
            <person name="Ainscough R."/>
            <person name="Ambrose K.D."/>
            <person name="Ansari-Lari M.A."/>
            <person name="Aradhya S."/>
            <person name="Ashwell R.I."/>
            <person name="Babbage A.K."/>
            <person name="Bagguley C.L."/>
            <person name="Ballabio A."/>
            <person name="Banerjee R."/>
            <person name="Barker G.E."/>
            <person name="Barlow K.F."/>
            <person name="Barrett I.P."/>
            <person name="Bates K.N."/>
            <person name="Beare D.M."/>
            <person name="Beasley H."/>
            <person name="Beasley O."/>
            <person name="Beck A."/>
            <person name="Bethel G."/>
            <person name="Blechschmidt K."/>
            <person name="Brady N."/>
            <person name="Bray-Allen S."/>
            <person name="Bridgeman A.M."/>
            <person name="Brown A.J."/>
            <person name="Brown M.J."/>
            <person name="Bonnin D."/>
            <person name="Bruford E.A."/>
            <person name="Buhay C."/>
            <person name="Burch P."/>
            <person name="Burford D."/>
            <person name="Burgess J."/>
            <person name="Burrill W."/>
            <person name="Burton J."/>
            <person name="Bye J.M."/>
            <person name="Carder C."/>
            <person name="Carrel L."/>
            <person name="Chako J."/>
            <person name="Chapman J.C."/>
            <person name="Chavez D."/>
            <person name="Chen E."/>
            <person name="Chen G."/>
            <person name="Chen Y."/>
            <person name="Chen Z."/>
            <person name="Chinault C."/>
            <person name="Ciccodicola A."/>
            <person name="Clark S.Y."/>
            <person name="Clarke G."/>
            <person name="Clee C.M."/>
            <person name="Clegg S."/>
            <person name="Clerc-Blankenburg K."/>
            <person name="Clifford K."/>
            <person name="Cobley V."/>
            <person name="Cole C.G."/>
            <person name="Conquer J.S."/>
            <person name="Corby N."/>
            <person name="Connor R.E."/>
            <person name="David R."/>
            <person name="Davies J."/>
            <person name="Davis C."/>
            <person name="Davis J."/>
            <person name="Delgado O."/>
            <person name="Deshazo D."/>
            <person name="Dhami P."/>
            <person name="Ding Y."/>
            <person name="Dinh H."/>
            <person name="Dodsworth S."/>
            <person name="Draper H."/>
            <person name="Dugan-Rocha S."/>
            <person name="Dunham A."/>
            <person name="Dunn M."/>
            <person name="Durbin K.J."/>
            <person name="Dutta I."/>
            <person name="Eades T."/>
            <person name="Ellwood M."/>
            <person name="Emery-Cohen A."/>
            <person name="Errington H."/>
            <person name="Evans K.L."/>
            <person name="Faulkner L."/>
            <person name="Francis F."/>
            <person name="Frankland J."/>
            <person name="Fraser A.E."/>
            <person name="Galgoczy P."/>
            <person name="Gilbert J."/>
            <person name="Gill R."/>
            <person name="Gloeckner G."/>
            <person name="Gregory S.G."/>
            <person name="Gribble S."/>
            <person name="Griffiths C."/>
            <person name="Grocock R."/>
            <person name="Gu Y."/>
            <person name="Gwilliam R."/>
            <person name="Hamilton C."/>
            <person name="Hart E.A."/>
            <person name="Hawes A."/>
            <person name="Heath P.D."/>
            <person name="Heitmann K."/>
            <person name="Hennig S."/>
            <person name="Hernandez J."/>
            <person name="Hinzmann B."/>
            <person name="Ho S."/>
            <person name="Hoffs M."/>
            <person name="Howden P.J."/>
            <person name="Huckle E.J."/>
            <person name="Hume J."/>
            <person name="Hunt P.J."/>
            <person name="Hunt A.R."/>
            <person name="Isherwood J."/>
            <person name="Jacob L."/>
            <person name="Johnson D."/>
            <person name="Jones S."/>
            <person name="de Jong P.J."/>
            <person name="Joseph S.S."/>
            <person name="Keenan S."/>
            <person name="Kelly S."/>
            <person name="Kershaw J.K."/>
            <person name="Khan Z."/>
            <person name="Kioschis P."/>
            <person name="Klages S."/>
            <person name="Knights A.J."/>
            <person name="Kosiura A."/>
            <person name="Kovar-Smith C."/>
            <person name="Laird G.K."/>
            <person name="Langford C."/>
            <person name="Lawlor S."/>
            <person name="Leversha M."/>
            <person name="Lewis L."/>
            <person name="Liu W."/>
            <person name="Lloyd C."/>
            <person name="Lloyd D.M."/>
            <person name="Loulseged H."/>
            <person name="Loveland J.E."/>
            <person name="Lovell J.D."/>
            <person name="Lozado R."/>
            <person name="Lu J."/>
            <person name="Lyne R."/>
            <person name="Ma J."/>
            <person name="Maheshwari M."/>
            <person name="Matthews L.H."/>
            <person name="McDowall J."/>
            <person name="McLaren S."/>
            <person name="McMurray A."/>
            <person name="Meidl P."/>
            <person name="Meitinger T."/>
            <person name="Milne S."/>
            <person name="Miner G."/>
            <person name="Mistry S.L."/>
            <person name="Morgan M."/>
            <person name="Morris S."/>
            <person name="Mueller I."/>
            <person name="Mullikin J.C."/>
            <person name="Nguyen N."/>
            <person name="Nordsiek G."/>
            <person name="Nyakatura G."/>
            <person name="O'dell C.N."/>
            <person name="Okwuonu G."/>
            <person name="Palmer S."/>
            <person name="Pandian R."/>
            <person name="Parker D."/>
            <person name="Parrish J."/>
            <person name="Pasternak S."/>
            <person name="Patel D."/>
            <person name="Pearce A.V."/>
            <person name="Pearson D.M."/>
            <person name="Pelan S.E."/>
            <person name="Perez L."/>
            <person name="Porter K.M."/>
            <person name="Ramsey Y."/>
            <person name="Reichwald K."/>
            <person name="Rhodes S."/>
            <person name="Ridler K.A."/>
            <person name="Schlessinger D."/>
            <person name="Schueler M.G."/>
            <person name="Sehra H.K."/>
            <person name="Shaw-Smith C."/>
            <person name="Shen H."/>
            <person name="Sheridan E.M."/>
            <person name="Shownkeen R."/>
            <person name="Skuce C.D."/>
            <person name="Smith M.L."/>
            <person name="Sotheran E.C."/>
            <person name="Steingruber H.E."/>
            <person name="Steward C.A."/>
            <person name="Storey R."/>
            <person name="Swann R.M."/>
            <person name="Swarbreck D."/>
            <person name="Tabor P.E."/>
            <person name="Taudien S."/>
            <person name="Taylor T."/>
            <person name="Teague B."/>
            <person name="Thomas K."/>
            <person name="Thorpe A."/>
            <person name="Timms K."/>
            <person name="Tracey A."/>
            <person name="Trevanion S."/>
            <person name="Tromans A.C."/>
            <person name="d'Urso M."/>
            <person name="Verduzco D."/>
            <person name="Villasana D."/>
            <person name="Waldron L."/>
            <person name="Wall M."/>
            <person name="Wang Q."/>
            <person name="Warren J."/>
            <person name="Warry G.L."/>
            <person name="Wei X."/>
            <person name="West A."/>
            <person name="Whitehead S.L."/>
            <person name="Whiteley M.N."/>
            <person name="Wilkinson J.E."/>
            <person name="Willey D.L."/>
            <person name="Williams G."/>
            <person name="Williams L."/>
            <person name="Williamson A."/>
            <person name="Williamson H."/>
            <person name="Wilming L."/>
            <person name="Woodmansey R.L."/>
            <person name="Wray P.W."/>
            <person name="Yen J."/>
            <person name="Zhang J."/>
            <person name="Zhou J."/>
            <person name="Zoghbi H."/>
            <person name="Zorilla S."/>
            <person name="Buck D."/>
            <person name="Reinhardt R."/>
            <person name="Poustka A."/>
            <person name="Rosenthal A."/>
            <person name="Lehrach H."/>
            <person name="Meindl A."/>
            <person name="Minx P.J."/>
            <person name="Hillier L.W."/>
            <person name="Willard H.F."/>
            <person name="Wilson R.K."/>
            <person name="Waterston R.H."/>
            <person name="Rice C.M."/>
            <person name="Vaudin M."/>
            <person name="Coulson A."/>
            <person name="Nelson D.L."/>
            <person name="Weinstock G."/>
            <person name="Sulston J.E."/>
            <person name="Durbin R.M."/>
            <person name="Hubbard T."/>
            <person name="Gibbs R.A."/>
            <person name="Beck S."/>
            <person name="Rogers J."/>
            <person name="Bentley D.R."/>
        </authorList>
    </citation>
    <scope>NUCLEOTIDE SEQUENCE [LARGE SCALE GENOMIC DNA]</scope>
</reference>
<reference key="5">
    <citation type="submission" date="2005-09" db="EMBL/GenBank/DDBJ databases">
        <authorList>
            <person name="Mural R.J."/>
            <person name="Istrail S."/>
            <person name="Sutton G.G."/>
            <person name="Florea L."/>
            <person name="Halpern A.L."/>
            <person name="Mobarry C.M."/>
            <person name="Lippert R."/>
            <person name="Walenz B."/>
            <person name="Shatkay H."/>
            <person name="Dew I."/>
            <person name="Miller J.R."/>
            <person name="Flanigan M.J."/>
            <person name="Edwards N.J."/>
            <person name="Bolanos R."/>
            <person name="Fasulo D."/>
            <person name="Halldorsson B.V."/>
            <person name="Hannenhalli S."/>
            <person name="Turner R."/>
            <person name="Yooseph S."/>
            <person name="Lu F."/>
            <person name="Nusskern D.R."/>
            <person name="Shue B.C."/>
            <person name="Zheng X.H."/>
            <person name="Zhong F."/>
            <person name="Delcher A.L."/>
            <person name="Huson D.H."/>
            <person name="Kravitz S.A."/>
            <person name="Mouchard L."/>
            <person name="Reinert K."/>
            <person name="Remington K.A."/>
            <person name="Clark A.G."/>
            <person name="Waterman M.S."/>
            <person name="Eichler E.E."/>
            <person name="Adams M.D."/>
            <person name="Hunkapiller M.W."/>
            <person name="Myers E.W."/>
            <person name="Venter J.C."/>
        </authorList>
    </citation>
    <scope>NUCLEOTIDE SEQUENCE [LARGE SCALE GENOMIC DNA]</scope>
</reference>
<reference key="6">
    <citation type="journal article" date="2004" name="Genome Res.">
        <title>The status, quality, and expansion of the NIH full-length cDNA project: the Mammalian Gene Collection (MGC).</title>
        <authorList>
            <consortium name="The MGC Project Team"/>
        </authorList>
    </citation>
    <scope>NUCLEOTIDE SEQUENCE [LARGE SCALE MRNA]</scope>
    <source>
        <tissue>Liver</tissue>
    </source>
</reference>
<reference key="7">
    <citation type="journal article" date="1977" name="Biochem. Biophys. Res. Commun.">
        <title>Partial amino acid sequence of human thyroxine-binding globulin. Further evidence for a single polypeptide chain.</title>
        <authorList>
            <person name="Cheng S.-Y."/>
        </authorList>
    </citation>
    <scope>PROTEIN SEQUENCE OF 21-40</scope>
</reference>
<reference key="8">
    <citation type="journal article" date="2005" name="J. Proteome Res.">
        <title>Human plasma N-glycoproteome analysis by immunoaffinity subtraction, hydrazide chemistry, and mass spectrometry.</title>
        <authorList>
            <person name="Liu T."/>
            <person name="Qian W.-J."/>
            <person name="Gritsenko M.A."/>
            <person name="Camp D.G. II"/>
            <person name="Monroe M.E."/>
            <person name="Moore R.J."/>
            <person name="Smith R.D."/>
        </authorList>
    </citation>
    <scope>GLYCOSYLATION [LARGE SCALE ANALYSIS] AT ASN-36 AND ASN-165</scope>
    <source>
        <tissue>Plasma</tissue>
    </source>
</reference>
<reference key="9">
    <citation type="journal article" date="2009" name="Nat. Methods">
        <title>Enrichment of glycopeptides for glycan structure and attachment site identification.</title>
        <authorList>
            <person name="Nilsson J."/>
            <person name="Rueetschi U."/>
            <person name="Halim A."/>
            <person name="Hesse C."/>
            <person name="Carlsohn E."/>
            <person name="Brinkmalm G."/>
            <person name="Larson G."/>
        </authorList>
    </citation>
    <scope>GLYCOSYLATION [LARGE SCALE ANALYSIS] AT ASN-36</scope>
    <scope>STRUCTURE OF CARBOHYDRATES</scope>
    <source>
        <tissue>Cerebrospinal fluid</tissue>
    </source>
</reference>
<reference key="10">
    <citation type="journal article" date="2011" name="BMC Syst. Biol.">
        <title>Initial characterization of the human central proteome.</title>
        <authorList>
            <person name="Burkard T.R."/>
            <person name="Planyavsky M."/>
            <person name="Kaupe I."/>
            <person name="Breitwieser F.P."/>
            <person name="Buerckstuemmer T."/>
            <person name="Bennett K.L."/>
            <person name="Superti-Furga G."/>
            <person name="Colinge J."/>
        </authorList>
    </citation>
    <scope>IDENTIFICATION BY MASS SPECTROMETRY [LARGE SCALE ANALYSIS]</scope>
</reference>
<reference key="11">
    <citation type="journal article" date="2006" name="Proc. Natl. Acad. Sci. U.S.A.">
        <title>Structural mechanism for the carriage and release of thyroxine in the blood.</title>
        <authorList>
            <person name="Zhou A."/>
            <person name="Wei Z."/>
            <person name="Read R.J."/>
            <person name="Carrell R.W."/>
        </authorList>
    </citation>
    <scope>X-RAY CRYSTALLOGRAPHY (2.8 ANGSTROMS) OF 39-415 IN COMPLEX WITH THYROXINE</scope>
</reference>
<reference key="12">
    <citation type="journal article" date="1992" name="Trends Endocrinol. Metab.">
        <title>Molecular basis of inherited thyroxine-binding globulin defects.</title>
        <authorList>
            <person name="Janssen O.E."/>
            <person name="Bertenshaw R."/>
            <person name="Takeda K."/>
            <person name="Weiss R."/>
            <person name="Refetoff S."/>
        </authorList>
    </citation>
    <scope>REVIEW ON VARIANTS</scope>
</reference>
<reference key="13">
    <citation type="journal article" date="1990" name="J. Clin. Endocrinol. Metab.">
        <title>Replacement of Leu227 by Pro in thyroxine-binding globulin (TBG) is associated with complete TBG deficiency in three of eight families with this inherited defect.</title>
        <authorList>
            <person name="Mori Y."/>
            <person name="Takeda K."/>
            <person name="Charbonneau M."/>
            <person name="Refetoff S."/>
        </authorList>
    </citation>
    <scope>POLYMORPHISM</scope>
    <scope>VARIANT PRO-247</scope>
</reference>
<reference key="14">
    <citation type="journal article" date="1989" name="Mol. Endocrinol.">
        <title>A mutation causing reduced biological activity and stability of thyroxine-binding globulin probably as a result of abnormal glycosylation of the molecule.</title>
        <authorList>
            <person name="Mori Y."/>
            <person name="Seino S."/>
            <person name="Takeda K."/>
            <person name="Flink I.L."/>
            <person name="Murata Y."/>
            <person name="Bell G.I."/>
            <person name="Refetoff S."/>
        </authorList>
    </citation>
    <scope>POLYMORPHISM</scope>
    <scope>VARIANT ASN-116</scope>
</reference>
<reference key="15">
    <citation type="journal article" date="1992" name="Endocrinol. Jpn.">
        <title>Thyroxine-binding globulin variant (TBG-Kumamoto): identification of a point mutation and genotype analysis of its family.</title>
        <authorList>
            <person name="Shirotani T."/>
            <person name="Kishikawa H."/>
            <person name="Wake N."/>
            <person name="Miyamura N."/>
            <person name="Hashimoto Y."/>
            <person name="Motoyoshi S."/>
            <person name="Yamaguchi K."/>
            <person name="Shichiri M."/>
        </authorList>
    </citation>
    <scope>POLYMORPHISM</scope>
    <scope>VARIANT LEU-383</scope>
</reference>
<reference key="16">
    <citation type="journal article" date="1991" name="Hum. Genet.">
        <title>Sequence of the variant thyroxine-binding globulin (TBG) in a Montreal family with partial TBG deficiency.</title>
        <authorList>
            <person name="Janssen O.E."/>
            <person name="Takeda K."/>
            <person name="Refetoff S."/>
        </authorList>
    </citation>
    <scope>POLYMORPHISM</scope>
    <scope>VARIANT PRO-133</scope>
</reference>
<reference key="17">
    <citation type="journal article" date="1991" name="Am. J. Hum. Genet.">
        <title>Sequencing of the variant thyroxine-binding globulin (TBG)-Quebec reveals two nucleotide substitutions.</title>
        <authorList>
            <person name="Bertenshaw R."/>
            <person name="Takeda K."/>
            <person name="Refetoff S."/>
        </authorList>
    </citation>
    <scope>POLYMORPHISM</scope>
    <scope>VARIANT TYR-351</scope>
</reference>
<reference key="18">
    <citation type="journal article" date="1992" name="Biochim. Biophys. Acta">
        <title>Sequencing of the variant thyroxine-binding globulin (TBG)-San Diego reveals two nucleotide substitutions.</title>
        <authorList>
            <person name="Bertenshaw R."/>
            <person name="Sarne D."/>
            <person name="Tornari J."/>
            <person name="Weinberg M."/>
            <person name="Refetoff S."/>
        </authorList>
    </citation>
    <scope>POLYMORPHISM</scope>
    <scope>VARIANTS THR-43 AND PHE-303</scope>
</reference>
<reference key="19">
    <citation type="journal article" date="1989" name="J. Clin. Invest.">
        <title>Sequence of the variant thyroxine-binding globulin of Australian aborigines. Only one of two amino acid replacements is responsible for its altered properties.</title>
        <authorList>
            <person name="Takeda K."/>
            <person name="Mori Y."/>
            <person name="Sobieszczyk S."/>
            <person name="Seo H."/>
            <person name="Dick M."/>
            <person name="Watson F."/>
            <person name="Flink I.L."/>
            <person name="Seino S."/>
            <person name="Bell G.I."/>
            <person name="Refetoff S."/>
        </authorList>
    </citation>
    <scope>VARIANT TBG-A THR-211</scope>
</reference>
<reference key="20">
    <citation type="journal article" date="1990" name="J. Endocrinol. Invest.">
        <title>Molecular basis for the properties of the thyroxine-binding globulin-slow variant in American blacks.</title>
        <authorList>
            <person name="Waltz M.R."/>
            <person name="Pullman T.N."/>
            <person name="Takeda K."/>
            <person name="Sobieszczyk P."/>
            <person name="Refetoff S."/>
        </authorList>
    </citation>
    <scope>VARIANT TBG-S ASN-191</scope>
</reference>
<sequence>MSPFLYLVLLVLGLHATIHCASPEGKVTACHSSQPNATLYKMSSINADFAFNLYRRFTVETPDKNIFFSPVSISAALVMLSFGACCSTQTEIVETLGFNLTDTPMVEIQHGFQHLICSLNFPKKELELQIGNALFIGKHLKPLAKFLNDVKTLYETEVFSTDFSNISAAKQEINSHVEMQTKGKVVGLIQDLKPNTIMVLVNYIHFKAQWANPFDPSKTEDSSSFLIDKTTTVQVPMMHQMEQYYHLVDMELNCTVLQMDYSKNALALFVLPKEGQMESVEAAMSSKTLKKWNRLLQKGWVDLFVPKFSISATYDLGATLLKMGIQHAYSENADFSGLTEDNGLKLSNAAHKAVLHIGEKGTEAAAVPEVELSDQPENTFLHPIIQIDRSFMLLILERSTRSILFLGKVVNPTEA</sequence>
<keyword id="KW-0002">3D-structure</keyword>
<keyword id="KW-0903">Direct protein sequencing</keyword>
<keyword id="KW-0325">Glycoprotein</keyword>
<keyword id="KW-1267">Proteomics identification</keyword>
<keyword id="KW-1185">Reference proteome</keyword>
<keyword id="KW-0964">Secreted</keyword>
<keyword id="KW-0732">Signal</keyword>